<protein>
    <recommendedName>
        <fullName evidence="2">DNA repair and recombination protein RAD54-like</fullName>
        <ecNumber>3.6.4.-</ecNumber>
    </recommendedName>
    <alternativeName>
        <fullName evidence="2">Protein okra</fullName>
    </alternativeName>
</protein>
<reference evidence="9" key="1">
    <citation type="journal article" date="2007" name="Nature">
        <title>Evolution of genes and genomes on the Drosophila phylogeny.</title>
        <authorList>
            <consortium name="Drosophila 12 genomes consortium"/>
        </authorList>
    </citation>
    <scope>NUCLEOTIDE SEQUENCE [LARGE SCALE GENOMIC DNA]</scope>
    <source>
        <strain evidence="9">Tai18E2 / Tucson 14021-0261.01</strain>
    </source>
</reference>
<reference evidence="7 8" key="2">
    <citation type="journal article" date="2009" name="Genetics">
        <title>Molecular population genetics and evolution of Drosophila meiosis genes.</title>
        <authorList>
            <person name="Anderson J.A."/>
            <person name="Gilliland W.D."/>
            <person name="Langley C.H."/>
        </authorList>
    </citation>
    <scope>NUCLEOTIDE SEQUENCE [GENOMIC DNA] OF 475-642</scope>
</reference>
<gene>
    <name evidence="2" type="primary">okr</name>
    <name type="ORF">GE14966</name>
</gene>
<comment type="function">
    <text evidence="2">Involved in mitotic DNA repair and meiotic recombination. Functions in the recombinational DNA repair pathway. Essential for interhomolog gene conversion (GC), but may have a less important role in intersister GC than spn-A/Rad51. In the presence of DNA, spn-A/Rad51 enhances the ATPase activity of okr/Rad54 (By similarity).</text>
</comment>
<comment type="subunit">
    <text evidence="1">Interacts (via N-terminus) with spn-A/Rad51.</text>
</comment>
<comment type="subcellular location">
    <subcellularLocation>
        <location evidence="2">Nucleus</location>
    </subcellularLocation>
</comment>
<comment type="similarity">
    <text evidence="3">Belongs to the SNF2/RAD54 helicase family.</text>
</comment>
<comment type="sequence caution" evidence="7">
    <conflict type="erroneous gene model prediction">
        <sequence resource="EMBL-CDS" id="EDW87475"/>
    </conflict>
</comment>
<dbReference type="EC" id="3.6.4.-"/>
<dbReference type="EMBL" id="CM000157">
    <property type="protein sequence ID" value="EDW87475.1"/>
    <property type="status" value="ALT_SEQ"/>
    <property type="molecule type" value="Genomic_DNA"/>
</dbReference>
<dbReference type="EMBL" id="FJ219212">
    <property type="protein sequence ID" value="ACI97197.1"/>
    <property type="molecule type" value="Genomic_DNA"/>
</dbReference>
<dbReference type="SMR" id="B4NXB8"/>
<dbReference type="EnsemblMetazoa" id="FBtr0261484">
    <property type="protein sequence ID" value="FBpp0259976"/>
    <property type="gene ID" value="FBgn0232556"/>
</dbReference>
<dbReference type="EnsemblMetazoa" id="XM_002087727.4">
    <property type="protein sequence ID" value="XP_002087763.2"/>
    <property type="gene ID" value="LOC6526655"/>
</dbReference>
<dbReference type="GeneID" id="6526655"/>
<dbReference type="KEGG" id="dya:Dyak_GE14966"/>
<dbReference type="CTD" id="33507"/>
<dbReference type="eggNOG" id="KOG0390">
    <property type="taxonomic scope" value="Eukaryota"/>
</dbReference>
<dbReference type="OrthoDB" id="413460at2759"/>
<dbReference type="ChiTaRS" id="okr">
    <property type="organism name" value="fly"/>
</dbReference>
<dbReference type="Proteomes" id="UP000002282">
    <property type="component" value="Chromosome 2L"/>
</dbReference>
<dbReference type="GO" id="GO:0005634">
    <property type="term" value="C:nucleus"/>
    <property type="evidence" value="ECO:0000250"/>
    <property type="project" value="UniProtKB"/>
</dbReference>
<dbReference type="GO" id="GO:0005524">
    <property type="term" value="F:ATP binding"/>
    <property type="evidence" value="ECO:0007669"/>
    <property type="project" value="UniProtKB-KW"/>
</dbReference>
<dbReference type="GO" id="GO:0016887">
    <property type="term" value="F:ATP hydrolysis activity"/>
    <property type="evidence" value="ECO:0007669"/>
    <property type="project" value="EnsemblMetazoa"/>
</dbReference>
<dbReference type="GO" id="GO:0140658">
    <property type="term" value="F:ATP-dependent chromatin remodeler activity"/>
    <property type="evidence" value="ECO:0007669"/>
    <property type="project" value="EnsemblMetazoa"/>
</dbReference>
<dbReference type="GO" id="GO:0003677">
    <property type="term" value="F:DNA binding"/>
    <property type="evidence" value="ECO:0007669"/>
    <property type="project" value="UniProtKB-KW"/>
</dbReference>
<dbReference type="GO" id="GO:0015616">
    <property type="term" value="F:DNA translocase activity"/>
    <property type="evidence" value="ECO:0007669"/>
    <property type="project" value="TreeGrafter"/>
</dbReference>
<dbReference type="GO" id="GO:0004386">
    <property type="term" value="F:helicase activity"/>
    <property type="evidence" value="ECO:0007669"/>
    <property type="project" value="UniProtKB-KW"/>
</dbReference>
<dbReference type="GO" id="GO:0051301">
    <property type="term" value="P:cell division"/>
    <property type="evidence" value="ECO:0007669"/>
    <property type="project" value="UniProtKB-KW"/>
</dbReference>
<dbReference type="GO" id="GO:0006338">
    <property type="term" value="P:chromatin remodeling"/>
    <property type="evidence" value="ECO:0000250"/>
    <property type="project" value="UniProtKB"/>
</dbReference>
<dbReference type="GO" id="GO:0043150">
    <property type="term" value="P:DNA synthesis involved in double-strand break repair via homologous recombination"/>
    <property type="evidence" value="ECO:0000250"/>
    <property type="project" value="UniProtKB"/>
</dbReference>
<dbReference type="GO" id="GO:0000724">
    <property type="term" value="P:double-strand break repair via homologous recombination"/>
    <property type="evidence" value="ECO:0000250"/>
    <property type="project" value="UniProtKB"/>
</dbReference>
<dbReference type="GO" id="GO:0045003">
    <property type="term" value="P:double-strand break repair via synthesis-dependent strand annealing"/>
    <property type="evidence" value="ECO:0007669"/>
    <property type="project" value="EnsemblMetazoa"/>
</dbReference>
<dbReference type="GO" id="GO:0000711">
    <property type="term" value="P:meiotic DNA repair synthesis"/>
    <property type="evidence" value="ECO:0000250"/>
    <property type="project" value="UniProtKB"/>
</dbReference>
<dbReference type="GO" id="GO:0030716">
    <property type="term" value="P:oocyte fate determination"/>
    <property type="evidence" value="ECO:0007669"/>
    <property type="project" value="EnsemblMetazoa"/>
</dbReference>
<dbReference type="GO" id="GO:0048477">
    <property type="term" value="P:oogenesis"/>
    <property type="evidence" value="ECO:0007669"/>
    <property type="project" value="EnsemblMetazoa"/>
</dbReference>
<dbReference type="GO" id="GO:0007131">
    <property type="term" value="P:reciprocal meiotic recombination"/>
    <property type="evidence" value="ECO:0007669"/>
    <property type="project" value="EnsemblMetazoa"/>
</dbReference>
<dbReference type="GO" id="GO:0010212">
    <property type="term" value="P:response to ionizing radiation"/>
    <property type="evidence" value="ECO:0000250"/>
    <property type="project" value="UniProtKB"/>
</dbReference>
<dbReference type="CDD" id="cd18067">
    <property type="entry name" value="DEXHc_RAD54A"/>
    <property type="match status" value="1"/>
</dbReference>
<dbReference type="CDD" id="cd18793">
    <property type="entry name" value="SF2_C_SNF"/>
    <property type="match status" value="1"/>
</dbReference>
<dbReference type="FunFam" id="3.40.50.10810:FF:000010">
    <property type="entry name" value="DNA repair and recombination protein RAD54-like"/>
    <property type="match status" value="1"/>
</dbReference>
<dbReference type="FunFam" id="3.40.50.300:FF:000332">
    <property type="entry name" value="DNA repair and recombination protein RAD54-like"/>
    <property type="match status" value="1"/>
</dbReference>
<dbReference type="Gene3D" id="3.40.50.300">
    <property type="entry name" value="P-loop containing nucleotide triphosphate hydrolases"/>
    <property type="match status" value="1"/>
</dbReference>
<dbReference type="Gene3D" id="1.20.120.850">
    <property type="entry name" value="SWI2/SNF2 ATPases, N-terminal domain"/>
    <property type="match status" value="1"/>
</dbReference>
<dbReference type="Gene3D" id="3.40.50.10810">
    <property type="entry name" value="Tandem AAA-ATPase domain"/>
    <property type="match status" value="1"/>
</dbReference>
<dbReference type="InterPro" id="IPR014001">
    <property type="entry name" value="Helicase_ATP-bd"/>
</dbReference>
<dbReference type="InterPro" id="IPR001650">
    <property type="entry name" value="Helicase_C-like"/>
</dbReference>
<dbReference type="InterPro" id="IPR027417">
    <property type="entry name" value="P-loop_NTPase"/>
</dbReference>
<dbReference type="InterPro" id="IPR038718">
    <property type="entry name" value="SNF2-like_sf"/>
</dbReference>
<dbReference type="InterPro" id="IPR049730">
    <property type="entry name" value="SNF2/RAD54-like_C"/>
</dbReference>
<dbReference type="InterPro" id="IPR000330">
    <property type="entry name" value="SNF2_N"/>
</dbReference>
<dbReference type="InterPro" id="IPR050496">
    <property type="entry name" value="SNF2_RAD54_helicase_repair"/>
</dbReference>
<dbReference type="PANTHER" id="PTHR45629:SF7">
    <property type="entry name" value="DNA EXCISION REPAIR PROTEIN ERCC-6-RELATED"/>
    <property type="match status" value="1"/>
</dbReference>
<dbReference type="PANTHER" id="PTHR45629">
    <property type="entry name" value="SNF2/RAD54 FAMILY MEMBER"/>
    <property type="match status" value="1"/>
</dbReference>
<dbReference type="Pfam" id="PF00271">
    <property type="entry name" value="Helicase_C"/>
    <property type="match status" value="1"/>
</dbReference>
<dbReference type="Pfam" id="PF00176">
    <property type="entry name" value="SNF2-rel_dom"/>
    <property type="match status" value="1"/>
</dbReference>
<dbReference type="SMART" id="SM00487">
    <property type="entry name" value="DEXDc"/>
    <property type="match status" value="1"/>
</dbReference>
<dbReference type="SMART" id="SM00490">
    <property type="entry name" value="HELICc"/>
    <property type="match status" value="1"/>
</dbReference>
<dbReference type="SUPFAM" id="SSF52540">
    <property type="entry name" value="P-loop containing nucleoside triphosphate hydrolases"/>
    <property type="match status" value="2"/>
</dbReference>
<dbReference type="PROSITE" id="PS51192">
    <property type="entry name" value="HELICASE_ATP_BIND_1"/>
    <property type="match status" value="1"/>
</dbReference>
<dbReference type="PROSITE" id="PS51194">
    <property type="entry name" value="HELICASE_CTER"/>
    <property type="match status" value="1"/>
</dbReference>
<sequence>MRRSLAPSQRGPMRPESRHSFTPPLLKKNKRSCQQELEREQELDRKRQSALRDASNTMDLPLPIRFTANSEYERAIAKVLARKFKVPMDNYVPDYGGKRVLGVRRCISRRPLHDPVACNALVLFNPPAYTEHERMGMDPTKVLVHVVVDPLLSNILRPHQREGVRFMYECVEGKRGNFNGCIMADEMGLGKTLQCVTLVWTLLRQGPECKPTINKAIVVSPSSLVKNWEKEFTKWLQGRLLCLPMEGGTKENTIRALEQFSMTSSRLGTPVLLISYETFRIYAEILCKYEVGMVICDEGHRLKNSDNLTYQALMGLKTKRRVLLSGTPIQNDLTEYYSLVNFVNPEMLGTAAVFKRNFESAILRGQNTDSTEGERQRAIEKTQELIGLVDQCIIRRTNQILTKYLPVKFEMVICAKLTSIQLELYTNFLKSDQVRRSLADCNEKASLTALADITTLKKICSHPDLIYEKITAREKGFENSQNVLPSNYNTKDLNPELSGKFMLLDFMLAAIRADGNDKVVLISNYTQTLDLFEQLARKRKYGFVRLDGTMSIKKRSKVVDRFNDPESDSFLFMLSSKAGGCGLNLIGANRLFMFDPDWNPANDEQAMARVWRDGQKKPCYIYRMVASGSIEEKILQRQTHKKSLSSTIIDNNESAEKHFTRDDLKDLFTFDADILSDTHEKLKCKRCVQNVQVKPPPDNTDCTSHLSQWYHCSNNRGLPDNILAQAWTDCKCVSFVFHHRSQAQEIVAIAEEAASEQPEEKPDRRKRPSTPPSDDSADEDFLGF</sequence>
<organism>
    <name type="scientific">Drosophila yakuba</name>
    <name type="common">Fruit fly</name>
    <dbReference type="NCBI Taxonomy" id="7245"/>
    <lineage>
        <taxon>Eukaryota</taxon>
        <taxon>Metazoa</taxon>
        <taxon>Ecdysozoa</taxon>
        <taxon>Arthropoda</taxon>
        <taxon>Hexapoda</taxon>
        <taxon>Insecta</taxon>
        <taxon>Pterygota</taxon>
        <taxon>Neoptera</taxon>
        <taxon>Endopterygota</taxon>
        <taxon>Diptera</taxon>
        <taxon>Brachycera</taxon>
        <taxon>Muscomorpha</taxon>
        <taxon>Ephydroidea</taxon>
        <taxon>Drosophilidae</taxon>
        <taxon>Drosophila</taxon>
        <taxon>Sophophora</taxon>
    </lineage>
</organism>
<feature type="chain" id="PRO_0000392528" description="DNA repair and recombination protein RAD54-like">
    <location>
        <begin position="1"/>
        <end position="784"/>
    </location>
</feature>
<feature type="domain" description="Helicase ATP-binding" evidence="4">
    <location>
        <begin position="172"/>
        <end position="346"/>
    </location>
</feature>
<feature type="domain" description="Helicase C-terminal" evidence="5">
    <location>
        <begin position="503"/>
        <end position="660"/>
    </location>
</feature>
<feature type="region of interest" description="Disordered" evidence="6">
    <location>
        <begin position="1"/>
        <end position="54"/>
    </location>
</feature>
<feature type="region of interest" description="Required for chromatin remodeling, strand pairing activities and coupling of ATPase activity" evidence="2">
    <location>
        <begin position="2"/>
        <end position="9"/>
    </location>
</feature>
<feature type="region of interest" description="Disordered" evidence="6">
    <location>
        <begin position="751"/>
        <end position="784"/>
    </location>
</feature>
<feature type="short sequence motif" description="DEGH box" evidence="3">
    <location>
        <begin position="297"/>
        <end position="300"/>
    </location>
</feature>
<feature type="compositionally biased region" description="Basic and acidic residues" evidence="6">
    <location>
        <begin position="36"/>
        <end position="47"/>
    </location>
</feature>
<feature type="compositionally biased region" description="Acidic residues" evidence="6">
    <location>
        <begin position="775"/>
        <end position="784"/>
    </location>
</feature>
<feature type="binding site" evidence="4">
    <location>
        <begin position="185"/>
        <end position="192"/>
    </location>
    <ligand>
        <name>ATP</name>
        <dbReference type="ChEBI" id="CHEBI:30616"/>
    </ligand>
</feature>
<feature type="modified residue" description="Phosphoserine" evidence="2">
    <location>
        <position position="20"/>
    </location>
</feature>
<feature type="modified residue" description="Phosphothreonine" evidence="2">
    <location>
        <position position="22"/>
    </location>
</feature>
<keyword id="KW-0067">ATP-binding</keyword>
<keyword id="KW-0131">Cell cycle</keyword>
<keyword id="KW-0132">Cell division</keyword>
<keyword id="KW-0227">DNA damage</keyword>
<keyword id="KW-0234">DNA repair</keyword>
<keyword id="KW-0238">DNA-binding</keyword>
<keyword id="KW-0347">Helicase</keyword>
<keyword id="KW-0378">Hydrolase</keyword>
<keyword id="KW-0469">Meiosis</keyword>
<keyword id="KW-0498">Mitosis</keyword>
<keyword id="KW-0547">Nucleotide-binding</keyword>
<keyword id="KW-0539">Nucleus</keyword>
<keyword id="KW-0597">Phosphoprotein</keyword>
<proteinExistence type="inferred from homology"/>
<evidence type="ECO:0000250" key="1"/>
<evidence type="ECO:0000250" key="2">
    <source>
        <dbReference type="UniProtKB" id="O76460"/>
    </source>
</evidence>
<evidence type="ECO:0000255" key="3"/>
<evidence type="ECO:0000255" key="4">
    <source>
        <dbReference type="PROSITE-ProRule" id="PRU00541"/>
    </source>
</evidence>
<evidence type="ECO:0000255" key="5">
    <source>
        <dbReference type="PROSITE-ProRule" id="PRU00542"/>
    </source>
</evidence>
<evidence type="ECO:0000256" key="6">
    <source>
        <dbReference type="SAM" id="MobiDB-lite"/>
    </source>
</evidence>
<evidence type="ECO:0000305" key="7"/>
<evidence type="ECO:0000312" key="8">
    <source>
        <dbReference type="EMBL" id="ACI97197.1"/>
    </source>
</evidence>
<evidence type="ECO:0000312" key="9">
    <source>
        <dbReference type="EMBL" id="EDW87475.1"/>
    </source>
</evidence>
<accession>B4NXB8</accession>
<accession>B6UXG4</accession>
<name>RAD54_DROYA</name>